<protein>
    <recommendedName>
        <fullName evidence="1">Indole-3-glycerol phosphate synthase</fullName>
        <shortName evidence="1">IGPS</shortName>
        <ecNumber evidence="1">4.1.1.48</ecNumber>
    </recommendedName>
</protein>
<proteinExistence type="inferred from homology"/>
<comment type="catalytic activity">
    <reaction evidence="1">
        <text>1-(2-carboxyphenylamino)-1-deoxy-D-ribulose 5-phosphate + H(+) = (1S,2R)-1-C-(indol-3-yl)glycerol 3-phosphate + CO2 + H2O</text>
        <dbReference type="Rhea" id="RHEA:23476"/>
        <dbReference type="ChEBI" id="CHEBI:15377"/>
        <dbReference type="ChEBI" id="CHEBI:15378"/>
        <dbReference type="ChEBI" id="CHEBI:16526"/>
        <dbReference type="ChEBI" id="CHEBI:58613"/>
        <dbReference type="ChEBI" id="CHEBI:58866"/>
        <dbReference type="EC" id="4.1.1.48"/>
    </reaction>
</comment>
<comment type="pathway">
    <text evidence="1">Amino-acid biosynthesis; L-tryptophan biosynthesis; L-tryptophan from chorismate: step 4/5.</text>
</comment>
<comment type="similarity">
    <text evidence="1">Belongs to the TrpC family.</text>
</comment>
<keyword id="KW-0028">Amino-acid biosynthesis</keyword>
<keyword id="KW-0057">Aromatic amino acid biosynthesis</keyword>
<keyword id="KW-0210">Decarboxylase</keyword>
<keyword id="KW-0456">Lyase</keyword>
<keyword id="KW-0822">Tryptophan biosynthesis</keyword>
<reference key="1">
    <citation type="submission" date="2007-04" db="EMBL/GenBank/DDBJ databases">
        <title>Complete sequence of Pseudomonas mendocina ymp.</title>
        <authorList>
            <consortium name="US DOE Joint Genome Institute"/>
            <person name="Copeland A."/>
            <person name="Lucas S."/>
            <person name="Lapidus A."/>
            <person name="Barry K."/>
            <person name="Glavina del Rio T."/>
            <person name="Dalin E."/>
            <person name="Tice H."/>
            <person name="Pitluck S."/>
            <person name="Kiss H."/>
            <person name="Brettin T."/>
            <person name="Detter J.C."/>
            <person name="Bruce D."/>
            <person name="Han C."/>
            <person name="Schmutz J."/>
            <person name="Larimer F."/>
            <person name="Land M."/>
            <person name="Hauser L."/>
            <person name="Kyrpides N."/>
            <person name="Mikhailova N."/>
            <person name="Hersman L."/>
            <person name="Dubois J."/>
            <person name="Maurice P."/>
            <person name="Richardson P."/>
        </authorList>
    </citation>
    <scope>NUCLEOTIDE SEQUENCE [LARGE SCALE GENOMIC DNA]</scope>
    <source>
        <strain>ymp</strain>
    </source>
</reference>
<feature type="chain" id="PRO_1000018534" description="Indole-3-glycerol phosphate synthase">
    <location>
        <begin position="1"/>
        <end position="279"/>
    </location>
</feature>
<dbReference type="EC" id="4.1.1.48" evidence="1"/>
<dbReference type="EMBL" id="CP000680">
    <property type="protein sequence ID" value="ABP86691.1"/>
    <property type="molecule type" value="Genomic_DNA"/>
</dbReference>
<dbReference type="SMR" id="A4XZC5"/>
<dbReference type="STRING" id="399739.Pmen_3944"/>
<dbReference type="KEGG" id="pmy:Pmen_3944"/>
<dbReference type="PATRIC" id="fig|399739.8.peg.3997"/>
<dbReference type="eggNOG" id="COG0134">
    <property type="taxonomic scope" value="Bacteria"/>
</dbReference>
<dbReference type="HOGENOM" id="CLU_034247_2_0_6"/>
<dbReference type="OrthoDB" id="9804217at2"/>
<dbReference type="UniPathway" id="UPA00035">
    <property type="reaction ID" value="UER00043"/>
</dbReference>
<dbReference type="GO" id="GO:0004425">
    <property type="term" value="F:indole-3-glycerol-phosphate synthase activity"/>
    <property type="evidence" value="ECO:0007669"/>
    <property type="project" value="UniProtKB-UniRule"/>
</dbReference>
<dbReference type="GO" id="GO:0004640">
    <property type="term" value="F:phosphoribosylanthranilate isomerase activity"/>
    <property type="evidence" value="ECO:0007669"/>
    <property type="project" value="TreeGrafter"/>
</dbReference>
<dbReference type="GO" id="GO:0000162">
    <property type="term" value="P:L-tryptophan biosynthetic process"/>
    <property type="evidence" value="ECO:0007669"/>
    <property type="project" value="UniProtKB-UniRule"/>
</dbReference>
<dbReference type="CDD" id="cd00331">
    <property type="entry name" value="IGPS"/>
    <property type="match status" value="1"/>
</dbReference>
<dbReference type="FunFam" id="3.20.20.70:FF:000024">
    <property type="entry name" value="Indole-3-glycerol phosphate synthase"/>
    <property type="match status" value="1"/>
</dbReference>
<dbReference type="Gene3D" id="3.20.20.70">
    <property type="entry name" value="Aldolase class I"/>
    <property type="match status" value="1"/>
</dbReference>
<dbReference type="HAMAP" id="MF_00134_B">
    <property type="entry name" value="IGPS_B"/>
    <property type="match status" value="1"/>
</dbReference>
<dbReference type="InterPro" id="IPR013785">
    <property type="entry name" value="Aldolase_TIM"/>
</dbReference>
<dbReference type="InterPro" id="IPR045186">
    <property type="entry name" value="Indole-3-glycerol_P_synth"/>
</dbReference>
<dbReference type="InterPro" id="IPR013798">
    <property type="entry name" value="Indole-3-glycerol_P_synth_dom"/>
</dbReference>
<dbReference type="InterPro" id="IPR001468">
    <property type="entry name" value="Indole-3-GlycerolPSynthase_CS"/>
</dbReference>
<dbReference type="InterPro" id="IPR011060">
    <property type="entry name" value="RibuloseP-bd_barrel"/>
</dbReference>
<dbReference type="NCBIfam" id="NF001370">
    <property type="entry name" value="PRK00278.1-2"/>
    <property type="match status" value="1"/>
</dbReference>
<dbReference type="NCBIfam" id="NF001373">
    <property type="entry name" value="PRK00278.1-6"/>
    <property type="match status" value="1"/>
</dbReference>
<dbReference type="NCBIfam" id="NF001377">
    <property type="entry name" value="PRK00278.2-4"/>
    <property type="match status" value="1"/>
</dbReference>
<dbReference type="PANTHER" id="PTHR22854:SF2">
    <property type="entry name" value="INDOLE-3-GLYCEROL-PHOSPHATE SYNTHASE"/>
    <property type="match status" value="1"/>
</dbReference>
<dbReference type="PANTHER" id="PTHR22854">
    <property type="entry name" value="TRYPTOPHAN BIOSYNTHESIS PROTEIN"/>
    <property type="match status" value="1"/>
</dbReference>
<dbReference type="Pfam" id="PF00218">
    <property type="entry name" value="IGPS"/>
    <property type="match status" value="1"/>
</dbReference>
<dbReference type="SUPFAM" id="SSF51366">
    <property type="entry name" value="Ribulose-phoshate binding barrel"/>
    <property type="match status" value="1"/>
</dbReference>
<dbReference type="PROSITE" id="PS00614">
    <property type="entry name" value="IGPS"/>
    <property type="match status" value="1"/>
</dbReference>
<sequence length="279" mass="30440">MSVPTVLEKIVARKFEEVAARRVQVSLAELEAAARAADAPRGFARALLEQAARKQPAVIAEIKKASPSKGVLRADFVPADIARSYEAGGATCLSVLTDIDFFQGADEYLQQARAACALPVIRKDFMVDPYQIVEARALGADCVLLIVSCLDDVRMAELAAVAKDVGLDVLVEVHDGNELERALNTLDTPLVGINNRNLHTFEVSLETTLDLLPRIPRERLVVTESGILNRADVELMEISEVYAFLVGEAFMRAESPGAELQRLFFPERGRPTVVGKDPE</sequence>
<evidence type="ECO:0000255" key="1">
    <source>
        <dbReference type="HAMAP-Rule" id="MF_00134"/>
    </source>
</evidence>
<name>TRPC_ECTM1</name>
<accession>A4XZC5</accession>
<gene>
    <name evidence="1" type="primary">trpC</name>
    <name type="ordered locus">Pmen_3944</name>
</gene>
<organism>
    <name type="scientific">Ectopseudomonas mendocina (strain ymp)</name>
    <name type="common">Pseudomonas mendocina</name>
    <dbReference type="NCBI Taxonomy" id="399739"/>
    <lineage>
        <taxon>Bacteria</taxon>
        <taxon>Pseudomonadati</taxon>
        <taxon>Pseudomonadota</taxon>
        <taxon>Gammaproteobacteria</taxon>
        <taxon>Pseudomonadales</taxon>
        <taxon>Pseudomonadaceae</taxon>
        <taxon>Ectopseudomonas</taxon>
    </lineage>
</organism>